<feature type="chain" id="PRO_0000352238" description="NAD(P)H-quinone oxidoreductase subunit N">
    <location>
        <begin position="1"/>
        <end position="147"/>
    </location>
</feature>
<gene>
    <name evidence="1" type="primary">ndhN</name>
    <name type="ordered locus">CYB_2627</name>
</gene>
<dbReference type="EC" id="7.1.1.-" evidence="1"/>
<dbReference type="EMBL" id="CP000240">
    <property type="protein sequence ID" value="ABD03557.1"/>
    <property type="molecule type" value="Genomic_DNA"/>
</dbReference>
<dbReference type="RefSeq" id="WP_011434182.1">
    <property type="nucleotide sequence ID" value="NC_007776.1"/>
</dbReference>
<dbReference type="SMR" id="Q2JIJ7"/>
<dbReference type="STRING" id="321332.CYB_2627"/>
<dbReference type="KEGG" id="cyb:CYB_2627"/>
<dbReference type="eggNOG" id="ENOG502ZBMI">
    <property type="taxonomic scope" value="Bacteria"/>
</dbReference>
<dbReference type="HOGENOM" id="CLU_087432_0_0_3"/>
<dbReference type="OrthoDB" id="510798at2"/>
<dbReference type="Proteomes" id="UP000001938">
    <property type="component" value="Chromosome"/>
</dbReference>
<dbReference type="GO" id="GO:0031676">
    <property type="term" value="C:plasma membrane-derived thylakoid membrane"/>
    <property type="evidence" value="ECO:0007669"/>
    <property type="project" value="UniProtKB-SubCell"/>
</dbReference>
<dbReference type="GO" id="GO:0016655">
    <property type="term" value="F:oxidoreductase activity, acting on NAD(P)H, quinone or similar compound as acceptor"/>
    <property type="evidence" value="ECO:0007669"/>
    <property type="project" value="UniProtKB-UniRule"/>
</dbReference>
<dbReference type="GO" id="GO:0048038">
    <property type="term" value="F:quinone binding"/>
    <property type="evidence" value="ECO:0007669"/>
    <property type="project" value="UniProtKB-KW"/>
</dbReference>
<dbReference type="HAMAP" id="MF_01353">
    <property type="entry name" value="NDH1_NDH1N"/>
    <property type="match status" value="1"/>
</dbReference>
<dbReference type="InterPro" id="IPR020874">
    <property type="entry name" value="NAD(P)H-quinone_OxRdtase_su_N"/>
</dbReference>
<dbReference type="PANTHER" id="PTHR35515">
    <property type="entry name" value="NAD(P)H-QUINONE OXIDOREDUCTASE SUBUNIT N, CHLOROPLASTIC"/>
    <property type="match status" value="1"/>
</dbReference>
<dbReference type="PANTHER" id="PTHR35515:SF1">
    <property type="entry name" value="NAD(P)H-QUINONE OXIDOREDUCTASE SUBUNIT N, CHLOROPLASTIC"/>
    <property type="match status" value="1"/>
</dbReference>
<dbReference type="Pfam" id="PF11909">
    <property type="entry name" value="NdhN"/>
    <property type="match status" value="1"/>
</dbReference>
<sequence length="147" mass="16478">MLLVGSGAKFVQQLEQAGALAIYVTPEGGSEGHYLRRLRGAGYEVVTLSSKGIGDLASYLTRIHGVRPATLGKSERRTYFFPALIEQYRATLPPKAKGLVFWFYEGHVFSQQELSYLVKLSREDKGVKFVVELGRERSIRWQPLQSA</sequence>
<protein>
    <recommendedName>
        <fullName evidence="1">NAD(P)H-quinone oxidoreductase subunit N</fullName>
        <ecNumber evidence="1">7.1.1.-</ecNumber>
    </recommendedName>
    <alternativeName>
        <fullName evidence="1">NAD(P)H dehydrogenase I subunit N</fullName>
        <shortName evidence="1">NDH-1 subunit N</shortName>
        <shortName evidence="1">NDH-N</shortName>
    </alternativeName>
</protein>
<organism>
    <name type="scientific">Synechococcus sp. (strain JA-2-3B'a(2-13))</name>
    <name type="common">Cyanobacteria bacterium Yellowstone B-Prime</name>
    <dbReference type="NCBI Taxonomy" id="321332"/>
    <lineage>
        <taxon>Bacteria</taxon>
        <taxon>Bacillati</taxon>
        <taxon>Cyanobacteriota</taxon>
        <taxon>Cyanophyceae</taxon>
        <taxon>Synechococcales</taxon>
        <taxon>Synechococcaceae</taxon>
        <taxon>Synechococcus</taxon>
    </lineage>
</organism>
<accession>Q2JIJ7</accession>
<reference key="1">
    <citation type="journal article" date="2007" name="ISME J.">
        <title>Population level functional diversity in a microbial community revealed by comparative genomic and metagenomic analyses.</title>
        <authorList>
            <person name="Bhaya D."/>
            <person name="Grossman A.R."/>
            <person name="Steunou A.-S."/>
            <person name="Khuri N."/>
            <person name="Cohan F.M."/>
            <person name="Hamamura N."/>
            <person name="Melendrez M.C."/>
            <person name="Bateson M.M."/>
            <person name="Ward D.M."/>
            <person name="Heidelberg J.F."/>
        </authorList>
    </citation>
    <scope>NUCLEOTIDE SEQUENCE [LARGE SCALE GENOMIC DNA]</scope>
    <source>
        <strain>JA-2-3B'a(2-13)</strain>
    </source>
</reference>
<comment type="function">
    <text evidence="1">NDH-1 shuttles electrons from an unknown electron donor, via FMN and iron-sulfur (Fe-S) centers, to quinones in the respiratory and/or the photosynthetic chain. The immediate electron acceptor for the enzyme in this species is believed to be plastoquinone. Couples the redox reaction to proton translocation, and thus conserves the redox energy in a proton gradient. Cyanobacterial NDH-1 also plays a role in inorganic carbon-concentration.</text>
</comment>
<comment type="catalytic activity">
    <reaction evidence="1">
        <text>a plastoquinone + NADH + (n+1) H(+)(in) = a plastoquinol + NAD(+) + n H(+)(out)</text>
        <dbReference type="Rhea" id="RHEA:42608"/>
        <dbReference type="Rhea" id="RHEA-COMP:9561"/>
        <dbReference type="Rhea" id="RHEA-COMP:9562"/>
        <dbReference type="ChEBI" id="CHEBI:15378"/>
        <dbReference type="ChEBI" id="CHEBI:17757"/>
        <dbReference type="ChEBI" id="CHEBI:57540"/>
        <dbReference type="ChEBI" id="CHEBI:57945"/>
        <dbReference type="ChEBI" id="CHEBI:62192"/>
    </reaction>
</comment>
<comment type="catalytic activity">
    <reaction evidence="1">
        <text>a plastoquinone + NADPH + (n+1) H(+)(in) = a plastoquinol + NADP(+) + n H(+)(out)</text>
        <dbReference type="Rhea" id="RHEA:42612"/>
        <dbReference type="Rhea" id="RHEA-COMP:9561"/>
        <dbReference type="Rhea" id="RHEA-COMP:9562"/>
        <dbReference type="ChEBI" id="CHEBI:15378"/>
        <dbReference type="ChEBI" id="CHEBI:17757"/>
        <dbReference type="ChEBI" id="CHEBI:57783"/>
        <dbReference type="ChEBI" id="CHEBI:58349"/>
        <dbReference type="ChEBI" id="CHEBI:62192"/>
    </reaction>
</comment>
<comment type="subunit">
    <text evidence="1">NDH-1 can be composed of about 15 different subunits; different subcomplexes with different compositions have been identified which probably have different functions.</text>
</comment>
<comment type="subcellular location">
    <subcellularLocation>
        <location evidence="1">Cellular thylakoid membrane</location>
        <topology evidence="1">Peripheral membrane protein</topology>
        <orientation evidence="1">Cytoplasmic side</orientation>
    </subcellularLocation>
</comment>
<comment type="similarity">
    <text evidence="1">Belongs to the complex I NdhN subunit family.</text>
</comment>
<name>NDHN_SYNJB</name>
<keyword id="KW-0472">Membrane</keyword>
<keyword id="KW-0520">NAD</keyword>
<keyword id="KW-0521">NADP</keyword>
<keyword id="KW-0618">Plastoquinone</keyword>
<keyword id="KW-0874">Quinone</keyword>
<keyword id="KW-1185">Reference proteome</keyword>
<keyword id="KW-0793">Thylakoid</keyword>
<keyword id="KW-1278">Translocase</keyword>
<keyword id="KW-0813">Transport</keyword>
<evidence type="ECO:0000255" key="1">
    <source>
        <dbReference type="HAMAP-Rule" id="MF_01353"/>
    </source>
</evidence>
<proteinExistence type="inferred from homology"/>